<evidence type="ECO:0000255" key="1">
    <source>
        <dbReference type="HAMAP-Rule" id="MF_01849"/>
    </source>
</evidence>
<evidence type="ECO:0000255" key="2">
    <source>
        <dbReference type="PROSITE-ProRule" id="PRU01266"/>
    </source>
</evidence>
<keyword id="KW-0004">4Fe-4S</keyword>
<keyword id="KW-0963">Cytoplasm</keyword>
<keyword id="KW-1015">Disulfide bond</keyword>
<keyword id="KW-0408">Iron</keyword>
<keyword id="KW-0411">Iron-sulfur</keyword>
<keyword id="KW-0479">Metal-binding</keyword>
<keyword id="KW-0489">Methyltransferase</keyword>
<keyword id="KW-1185">Reference proteome</keyword>
<keyword id="KW-0698">rRNA processing</keyword>
<keyword id="KW-0949">S-adenosyl-L-methionine</keyword>
<keyword id="KW-0808">Transferase</keyword>
<keyword id="KW-0819">tRNA processing</keyword>
<proteinExistence type="inferred from homology"/>
<gene>
    <name evidence="1" type="primary">rlmN</name>
    <name type="ordered locus">c3039</name>
</gene>
<accession>Q8FF55</accession>
<protein>
    <recommendedName>
        <fullName evidence="1">Dual-specificity RNA methyltransferase RlmN</fullName>
        <ecNumber evidence="1">2.1.1.192</ecNumber>
    </recommendedName>
    <alternativeName>
        <fullName evidence="1">23S rRNA (adenine(2503)-C(2))-methyltransferase</fullName>
    </alternativeName>
    <alternativeName>
        <fullName evidence="1">23S rRNA m2A2503 methyltransferase</fullName>
    </alternativeName>
    <alternativeName>
        <fullName evidence="1">Ribosomal RNA large subunit methyltransferase N</fullName>
    </alternativeName>
    <alternativeName>
        <fullName evidence="1">tRNA (adenine(37)-C(2))-methyltransferase</fullName>
    </alternativeName>
    <alternativeName>
        <fullName evidence="1">tRNA m2A37 methyltransferase</fullName>
    </alternativeName>
</protein>
<sequence>MSEQLVTPENVTTKDGKINLLDLNRQQMREFFKDLGEKPFRADQVMKWMYHYCCDNFDEMTDINKVLRGKLKEVAEIRAPEVVEEQRSSDGTIKWAIAVGDQRVETVYIPEDDRATLCVSSQVGCALECKFCSTAQQGFNRNLRVSEIIGQVWRAAKIVGAAKVTGQRPITNVVMMGMGEPLLNLNNVVPAMEIMLDDFGFGLSKRRVTLSTSGVVPALDKLGDMIDVALAISLHAPNDEIRDEIVPINKKYNIETFLAAVRRYLGKSNANQGRVTIEYVMLDHVNDGTEHAHQLAELLKDTPCKINLIPWNPFPGAPYGRSSNSRIDRFSKVLMSYGFTTIVRKTRGDDIDAACGQLAGDVIDRTKRTLRKRMQGEAIDIKAV</sequence>
<dbReference type="EC" id="2.1.1.192" evidence="1"/>
<dbReference type="EMBL" id="AE014075">
    <property type="protein sequence ID" value="AAN81489.1"/>
    <property type="molecule type" value="Genomic_DNA"/>
</dbReference>
<dbReference type="RefSeq" id="WP_000003323.1">
    <property type="nucleotide sequence ID" value="NZ_CP051263.1"/>
</dbReference>
<dbReference type="SMR" id="Q8FF55"/>
<dbReference type="STRING" id="199310.c3039"/>
<dbReference type="KEGG" id="ecc:c3039"/>
<dbReference type="eggNOG" id="COG0820">
    <property type="taxonomic scope" value="Bacteria"/>
</dbReference>
<dbReference type="HOGENOM" id="CLU_029101_0_0_6"/>
<dbReference type="BioCyc" id="ECOL199310:C3039-MONOMER"/>
<dbReference type="Proteomes" id="UP000001410">
    <property type="component" value="Chromosome"/>
</dbReference>
<dbReference type="GO" id="GO:0005737">
    <property type="term" value="C:cytoplasm"/>
    <property type="evidence" value="ECO:0007669"/>
    <property type="project" value="UniProtKB-SubCell"/>
</dbReference>
<dbReference type="GO" id="GO:0051539">
    <property type="term" value="F:4 iron, 4 sulfur cluster binding"/>
    <property type="evidence" value="ECO:0007669"/>
    <property type="project" value="UniProtKB-UniRule"/>
</dbReference>
<dbReference type="GO" id="GO:0046872">
    <property type="term" value="F:metal ion binding"/>
    <property type="evidence" value="ECO:0007669"/>
    <property type="project" value="UniProtKB-KW"/>
</dbReference>
<dbReference type="GO" id="GO:0070040">
    <property type="term" value="F:rRNA (adenine(2503)-C2-)-methyltransferase activity"/>
    <property type="evidence" value="ECO:0007669"/>
    <property type="project" value="UniProtKB-UniRule"/>
</dbReference>
<dbReference type="GO" id="GO:0019843">
    <property type="term" value="F:rRNA binding"/>
    <property type="evidence" value="ECO:0007669"/>
    <property type="project" value="UniProtKB-UniRule"/>
</dbReference>
<dbReference type="GO" id="GO:0002935">
    <property type="term" value="F:tRNA (adenine(37)-C2)-methyltransferase activity"/>
    <property type="evidence" value="ECO:0007669"/>
    <property type="project" value="UniProtKB-UniRule"/>
</dbReference>
<dbReference type="GO" id="GO:0000049">
    <property type="term" value="F:tRNA binding"/>
    <property type="evidence" value="ECO:0007669"/>
    <property type="project" value="UniProtKB-UniRule"/>
</dbReference>
<dbReference type="GO" id="GO:0070475">
    <property type="term" value="P:rRNA base methylation"/>
    <property type="evidence" value="ECO:0007669"/>
    <property type="project" value="UniProtKB-UniRule"/>
</dbReference>
<dbReference type="GO" id="GO:0030488">
    <property type="term" value="P:tRNA methylation"/>
    <property type="evidence" value="ECO:0007669"/>
    <property type="project" value="UniProtKB-UniRule"/>
</dbReference>
<dbReference type="CDD" id="cd01335">
    <property type="entry name" value="Radical_SAM"/>
    <property type="match status" value="1"/>
</dbReference>
<dbReference type="FunFam" id="1.10.150.530:FF:000001">
    <property type="entry name" value="Dual-specificity RNA methyltransferase RlmN"/>
    <property type="match status" value="1"/>
</dbReference>
<dbReference type="FunFam" id="3.20.20.70:FF:000008">
    <property type="entry name" value="Dual-specificity RNA methyltransferase RlmN"/>
    <property type="match status" value="1"/>
</dbReference>
<dbReference type="Gene3D" id="1.10.150.530">
    <property type="match status" value="1"/>
</dbReference>
<dbReference type="Gene3D" id="3.20.20.70">
    <property type="entry name" value="Aldolase class I"/>
    <property type="match status" value="1"/>
</dbReference>
<dbReference type="HAMAP" id="MF_01849">
    <property type="entry name" value="RNA_methyltr_RlmN"/>
    <property type="match status" value="1"/>
</dbReference>
<dbReference type="InterPro" id="IPR013785">
    <property type="entry name" value="Aldolase_TIM"/>
</dbReference>
<dbReference type="InterPro" id="IPR040072">
    <property type="entry name" value="Methyltransferase_A"/>
</dbReference>
<dbReference type="InterPro" id="IPR048641">
    <property type="entry name" value="RlmN_N"/>
</dbReference>
<dbReference type="InterPro" id="IPR027492">
    <property type="entry name" value="RNA_MTrfase_RlmN"/>
</dbReference>
<dbReference type="InterPro" id="IPR004383">
    <property type="entry name" value="rRNA_lsu_MTrfase_RlmN/Cfr"/>
</dbReference>
<dbReference type="InterPro" id="IPR007197">
    <property type="entry name" value="rSAM"/>
</dbReference>
<dbReference type="NCBIfam" id="NF008396">
    <property type="entry name" value="PRK11194.1"/>
    <property type="match status" value="1"/>
</dbReference>
<dbReference type="NCBIfam" id="TIGR00048">
    <property type="entry name" value="rRNA_mod_RlmN"/>
    <property type="match status" value="1"/>
</dbReference>
<dbReference type="PANTHER" id="PTHR30544">
    <property type="entry name" value="23S RRNA METHYLTRANSFERASE"/>
    <property type="match status" value="1"/>
</dbReference>
<dbReference type="PANTHER" id="PTHR30544:SF5">
    <property type="entry name" value="RADICAL SAM CORE DOMAIN-CONTAINING PROTEIN"/>
    <property type="match status" value="1"/>
</dbReference>
<dbReference type="Pfam" id="PF04055">
    <property type="entry name" value="Radical_SAM"/>
    <property type="match status" value="1"/>
</dbReference>
<dbReference type="Pfam" id="PF21016">
    <property type="entry name" value="RlmN_N"/>
    <property type="match status" value="1"/>
</dbReference>
<dbReference type="PIRSF" id="PIRSF006004">
    <property type="entry name" value="CHP00048"/>
    <property type="match status" value="1"/>
</dbReference>
<dbReference type="SFLD" id="SFLDF00275">
    <property type="entry name" value="adenosine_C2_methyltransferase"/>
    <property type="match status" value="1"/>
</dbReference>
<dbReference type="SFLD" id="SFLDG01062">
    <property type="entry name" value="methyltransferase_(Class_A)"/>
    <property type="match status" value="1"/>
</dbReference>
<dbReference type="SUPFAM" id="SSF102114">
    <property type="entry name" value="Radical SAM enzymes"/>
    <property type="match status" value="1"/>
</dbReference>
<dbReference type="PROSITE" id="PS51918">
    <property type="entry name" value="RADICAL_SAM"/>
    <property type="match status" value="1"/>
</dbReference>
<reference key="1">
    <citation type="journal article" date="2002" name="Proc. Natl. Acad. Sci. U.S.A.">
        <title>Extensive mosaic structure revealed by the complete genome sequence of uropathogenic Escherichia coli.</title>
        <authorList>
            <person name="Welch R.A."/>
            <person name="Burland V."/>
            <person name="Plunkett G. III"/>
            <person name="Redford P."/>
            <person name="Roesch P."/>
            <person name="Rasko D."/>
            <person name="Buckles E.L."/>
            <person name="Liou S.-R."/>
            <person name="Boutin A."/>
            <person name="Hackett J."/>
            <person name="Stroud D."/>
            <person name="Mayhew G.F."/>
            <person name="Rose D.J."/>
            <person name="Zhou S."/>
            <person name="Schwartz D.C."/>
            <person name="Perna N.T."/>
            <person name="Mobley H.L.T."/>
            <person name="Donnenberg M.S."/>
            <person name="Blattner F.R."/>
        </authorList>
    </citation>
    <scope>NUCLEOTIDE SEQUENCE [LARGE SCALE GENOMIC DNA]</scope>
    <source>
        <strain>CFT073 / ATCC 700928 / UPEC</strain>
    </source>
</reference>
<organism>
    <name type="scientific">Escherichia coli O6:H1 (strain CFT073 / ATCC 700928 / UPEC)</name>
    <dbReference type="NCBI Taxonomy" id="199310"/>
    <lineage>
        <taxon>Bacteria</taxon>
        <taxon>Pseudomonadati</taxon>
        <taxon>Pseudomonadota</taxon>
        <taxon>Gammaproteobacteria</taxon>
        <taxon>Enterobacterales</taxon>
        <taxon>Enterobacteriaceae</taxon>
        <taxon>Escherichia</taxon>
    </lineage>
</organism>
<comment type="function">
    <text evidence="1">Specifically methylates position 2 of adenine 2503 in 23S rRNA and position 2 of adenine 37 in tRNAs. m2A2503 modification seems to play a crucial role in the proofreading step occurring at the peptidyl transferase center and thus would serve to optimize ribosomal fidelity.</text>
</comment>
<comment type="catalytic activity">
    <reaction evidence="1">
        <text>adenosine(2503) in 23S rRNA + 2 reduced [2Fe-2S]-[ferredoxin] + 2 S-adenosyl-L-methionine = 2-methyladenosine(2503) in 23S rRNA + 5'-deoxyadenosine + L-methionine + 2 oxidized [2Fe-2S]-[ferredoxin] + S-adenosyl-L-homocysteine</text>
        <dbReference type="Rhea" id="RHEA:42916"/>
        <dbReference type="Rhea" id="RHEA-COMP:10000"/>
        <dbReference type="Rhea" id="RHEA-COMP:10001"/>
        <dbReference type="Rhea" id="RHEA-COMP:10152"/>
        <dbReference type="Rhea" id="RHEA-COMP:10282"/>
        <dbReference type="ChEBI" id="CHEBI:17319"/>
        <dbReference type="ChEBI" id="CHEBI:33737"/>
        <dbReference type="ChEBI" id="CHEBI:33738"/>
        <dbReference type="ChEBI" id="CHEBI:57844"/>
        <dbReference type="ChEBI" id="CHEBI:57856"/>
        <dbReference type="ChEBI" id="CHEBI:59789"/>
        <dbReference type="ChEBI" id="CHEBI:74411"/>
        <dbReference type="ChEBI" id="CHEBI:74497"/>
        <dbReference type="EC" id="2.1.1.192"/>
    </reaction>
</comment>
<comment type="catalytic activity">
    <reaction evidence="1">
        <text>adenosine(37) in tRNA + 2 reduced [2Fe-2S]-[ferredoxin] + 2 S-adenosyl-L-methionine = 2-methyladenosine(37) in tRNA + 5'-deoxyadenosine + L-methionine + 2 oxidized [2Fe-2S]-[ferredoxin] + S-adenosyl-L-homocysteine</text>
        <dbReference type="Rhea" id="RHEA:43332"/>
        <dbReference type="Rhea" id="RHEA-COMP:10000"/>
        <dbReference type="Rhea" id="RHEA-COMP:10001"/>
        <dbReference type="Rhea" id="RHEA-COMP:10162"/>
        <dbReference type="Rhea" id="RHEA-COMP:10485"/>
        <dbReference type="ChEBI" id="CHEBI:17319"/>
        <dbReference type="ChEBI" id="CHEBI:33737"/>
        <dbReference type="ChEBI" id="CHEBI:33738"/>
        <dbReference type="ChEBI" id="CHEBI:57844"/>
        <dbReference type="ChEBI" id="CHEBI:57856"/>
        <dbReference type="ChEBI" id="CHEBI:59789"/>
        <dbReference type="ChEBI" id="CHEBI:74411"/>
        <dbReference type="ChEBI" id="CHEBI:74497"/>
        <dbReference type="EC" id="2.1.1.192"/>
    </reaction>
</comment>
<comment type="cofactor">
    <cofactor evidence="1">
        <name>[4Fe-4S] cluster</name>
        <dbReference type="ChEBI" id="CHEBI:49883"/>
    </cofactor>
    <text evidence="1">Binds 1 [4Fe-4S] cluster. The cluster is coordinated with 3 cysteines and an exchangeable S-adenosyl-L-methionine.</text>
</comment>
<comment type="subcellular location">
    <subcellularLocation>
        <location evidence="1">Cytoplasm</location>
    </subcellularLocation>
</comment>
<comment type="miscellaneous">
    <text evidence="1">Reaction proceeds by a ping-pong mechanism involving intermediate methylation of a conserved cysteine residue.</text>
</comment>
<comment type="similarity">
    <text evidence="1">Belongs to the radical SAM superfamily. RlmN family.</text>
</comment>
<name>RLMN_ECOL6</name>
<feature type="chain" id="PRO_0000350171" description="Dual-specificity RNA methyltransferase RlmN">
    <location>
        <begin position="1"/>
        <end position="384"/>
    </location>
</feature>
<feature type="domain" description="Radical SAM core" evidence="2">
    <location>
        <begin position="111"/>
        <end position="350"/>
    </location>
</feature>
<feature type="active site" description="Proton acceptor" evidence="1">
    <location>
        <position position="105"/>
    </location>
</feature>
<feature type="active site" description="S-methylcysteine intermediate" evidence="1">
    <location>
        <position position="355"/>
    </location>
</feature>
<feature type="binding site" evidence="1">
    <location>
        <position position="125"/>
    </location>
    <ligand>
        <name>[4Fe-4S] cluster</name>
        <dbReference type="ChEBI" id="CHEBI:49883"/>
        <note>4Fe-4S-S-AdoMet</note>
    </ligand>
</feature>
<feature type="binding site" evidence="1">
    <location>
        <position position="129"/>
    </location>
    <ligand>
        <name>[4Fe-4S] cluster</name>
        <dbReference type="ChEBI" id="CHEBI:49883"/>
        <note>4Fe-4S-S-AdoMet</note>
    </ligand>
</feature>
<feature type="binding site" evidence="1">
    <location>
        <position position="132"/>
    </location>
    <ligand>
        <name>[4Fe-4S] cluster</name>
        <dbReference type="ChEBI" id="CHEBI:49883"/>
        <note>4Fe-4S-S-AdoMet</note>
    </ligand>
</feature>
<feature type="binding site" evidence="1">
    <location>
        <begin position="179"/>
        <end position="180"/>
    </location>
    <ligand>
        <name>S-adenosyl-L-methionine</name>
        <dbReference type="ChEBI" id="CHEBI:59789"/>
    </ligand>
</feature>
<feature type="binding site" evidence="1">
    <location>
        <position position="211"/>
    </location>
    <ligand>
        <name>S-adenosyl-L-methionine</name>
        <dbReference type="ChEBI" id="CHEBI:59789"/>
    </ligand>
</feature>
<feature type="binding site" evidence="1">
    <location>
        <begin position="233"/>
        <end position="235"/>
    </location>
    <ligand>
        <name>S-adenosyl-L-methionine</name>
        <dbReference type="ChEBI" id="CHEBI:59789"/>
    </ligand>
</feature>
<feature type="binding site" evidence="1">
    <location>
        <position position="312"/>
    </location>
    <ligand>
        <name>S-adenosyl-L-methionine</name>
        <dbReference type="ChEBI" id="CHEBI:59789"/>
    </ligand>
</feature>
<feature type="disulfide bond" description="(transient)" evidence="1">
    <location>
        <begin position="118"/>
        <end position="355"/>
    </location>
</feature>